<feature type="chain" id="PRO_0000106248" description="Valine--tRNA ligase">
    <location>
        <begin position="1"/>
        <end position="863"/>
    </location>
</feature>
<feature type="short sequence motif" description="'HIGH' region">
    <location>
        <begin position="43"/>
        <end position="53"/>
    </location>
</feature>
<feature type="short sequence motif" description="'KMSKS' region">
    <location>
        <begin position="517"/>
        <end position="521"/>
    </location>
</feature>
<feature type="binding site" evidence="1">
    <location>
        <position position="520"/>
    </location>
    <ligand>
        <name>ATP</name>
        <dbReference type="ChEBI" id="CHEBI:30616"/>
    </ligand>
</feature>
<accession>O28059</accession>
<name>SYV_ARCFU</name>
<comment type="function">
    <text evidence="1">Catalyzes the attachment of valine to tRNA(Val). As ValRS can inadvertently accommodate and process structurally similar amino acids such as threonine, to avoid such errors, it has a 'posttransfer' editing activity that hydrolyzes mischarged Thr-tRNA(Val) in a tRNA-dependent manner.</text>
</comment>
<comment type="catalytic activity">
    <reaction evidence="1">
        <text>tRNA(Val) + L-valine + ATP = L-valyl-tRNA(Val) + AMP + diphosphate</text>
        <dbReference type="Rhea" id="RHEA:10704"/>
        <dbReference type="Rhea" id="RHEA-COMP:9672"/>
        <dbReference type="Rhea" id="RHEA-COMP:9708"/>
        <dbReference type="ChEBI" id="CHEBI:30616"/>
        <dbReference type="ChEBI" id="CHEBI:33019"/>
        <dbReference type="ChEBI" id="CHEBI:57762"/>
        <dbReference type="ChEBI" id="CHEBI:78442"/>
        <dbReference type="ChEBI" id="CHEBI:78537"/>
        <dbReference type="ChEBI" id="CHEBI:456215"/>
        <dbReference type="EC" id="6.1.1.9"/>
    </reaction>
</comment>
<comment type="subcellular location">
    <subcellularLocation>
        <location evidence="1">Cytoplasm</location>
    </subcellularLocation>
</comment>
<comment type="domain">
    <text evidence="1">ValRS has two distinct active sites: one for aminoacylation and one for editing. The misactivated threonine is translocated from the active site to the editing site.</text>
</comment>
<comment type="similarity">
    <text evidence="1">Belongs to the class-I aminoacyl-tRNA synthetase family. ValS type 2 subfamily.</text>
</comment>
<sequence length="863" mass="100444">MEIRKDYDAHEVEEKWLKLWKDEMYYFDWNSEKPHYIIDTPPPYPTGSFHIGHALNWCIIDFIARYKRMNGYEVMFPQGWDCHGLPTEVKVEEKYGIKKGDIPRDEFRRLCVEFTEENIAKMRETARRMGYSIDWSKEYITMYPEYYSKTQLSFVRMYNKGLIYRDYHPVVFCPRCETTIALAEIEYRQGKTKLNYIKFDDDVIIATTRPELIPACVAIAVHPDDERNKHLIGKKVRVPTTPYEVEVIADEEVDPEFGTGVVMICTFGDRQDVKWWKKHKLELRNIVGRDGRLNEKAGRYAGMTIPEAREAILEDLKKEGKLLKQVEIDHNVGTCWRCKTPVEIIPAEQWFVKVEKEKILEAAKRIKWVPEHMYSRLESWVQSMEWDWVISRQRIFATPIPAWYCKNCGEVVVAKEEWLPVDPTATQPPEPCPKCGSTEFRGETDVLDTWMDSSITPLMICGWPSLKEYPTHLRPQGHDIIRTWAFYTILRSLALEGQIPWYEIVINGMVFGEDGRKMSKSLGNVIVPEEVVEKYGVDALRQWAASGVIGDDIIFNWKDVIAASRFQQKFWSITRFTLMHISDYTPSEEDKKLLRDADRWILSKLNRLVGEVRKHMDEYRFDEAIKAIRTFTWYEYADNYLEIVKNRLYSGSEEEKRAAKFVLSYALDVLTRLLAPITPFMAEECWSHFREGSVHLQSYPVVEEEFLDERAEKAGEEIKEIVAAVRKFKHDKGLALNAPLKKLIVYSKLDGLDVRDIAGATNSEVEIVTEMPEVRERVKELKPKFAIIGPMFREKAKTLIKAVGSLSKEEKERLLKEGAIQVNLDGASVEVKAEWFEAVTEKSIEGREVEMLETANSVVFVEV</sequence>
<evidence type="ECO:0000255" key="1">
    <source>
        <dbReference type="HAMAP-Rule" id="MF_02005"/>
    </source>
</evidence>
<dbReference type="EC" id="6.1.1.9" evidence="1"/>
<dbReference type="EMBL" id="AE000782">
    <property type="protein sequence ID" value="AAB89032.1"/>
    <property type="molecule type" value="Genomic_DNA"/>
</dbReference>
<dbReference type="PIR" id="H69527">
    <property type="entry name" value="H69527"/>
</dbReference>
<dbReference type="RefSeq" id="WP_010879713.1">
    <property type="nucleotide sequence ID" value="NC_000917.1"/>
</dbReference>
<dbReference type="SMR" id="O28059"/>
<dbReference type="STRING" id="224325.AF_2224"/>
<dbReference type="PaxDb" id="224325-AF_2224"/>
<dbReference type="EnsemblBacteria" id="AAB89032">
    <property type="protein sequence ID" value="AAB89032"/>
    <property type="gene ID" value="AF_2224"/>
</dbReference>
<dbReference type="GeneID" id="1485454"/>
<dbReference type="KEGG" id="afu:AF_2224"/>
<dbReference type="eggNOG" id="arCOG00808">
    <property type="taxonomic scope" value="Archaea"/>
</dbReference>
<dbReference type="HOGENOM" id="CLU_001493_0_2_2"/>
<dbReference type="OrthoDB" id="23906at2157"/>
<dbReference type="PhylomeDB" id="O28059"/>
<dbReference type="Proteomes" id="UP000002199">
    <property type="component" value="Chromosome"/>
</dbReference>
<dbReference type="GO" id="GO:0005829">
    <property type="term" value="C:cytosol"/>
    <property type="evidence" value="ECO:0007669"/>
    <property type="project" value="TreeGrafter"/>
</dbReference>
<dbReference type="GO" id="GO:0002161">
    <property type="term" value="F:aminoacyl-tRNA deacylase activity"/>
    <property type="evidence" value="ECO:0007669"/>
    <property type="project" value="InterPro"/>
</dbReference>
<dbReference type="GO" id="GO:0005524">
    <property type="term" value="F:ATP binding"/>
    <property type="evidence" value="ECO:0007669"/>
    <property type="project" value="UniProtKB-UniRule"/>
</dbReference>
<dbReference type="GO" id="GO:0004832">
    <property type="term" value="F:valine-tRNA ligase activity"/>
    <property type="evidence" value="ECO:0007669"/>
    <property type="project" value="UniProtKB-UniRule"/>
</dbReference>
<dbReference type="GO" id="GO:0006438">
    <property type="term" value="P:valyl-tRNA aminoacylation"/>
    <property type="evidence" value="ECO:0007669"/>
    <property type="project" value="UniProtKB-UniRule"/>
</dbReference>
<dbReference type="CDD" id="cd07962">
    <property type="entry name" value="Anticodon_Ia_Val"/>
    <property type="match status" value="1"/>
</dbReference>
<dbReference type="CDD" id="cd00817">
    <property type="entry name" value="ValRS_core"/>
    <property type="match status" value="1"/>
</dbReference>
<dbReference type="FunFam" id="1.10.730.10:FF:000033">
    <property type="entry name" value="Valine--tRNA ligase"/>
    <property type="match status" value="1"/>
</dbReference>
<dbReference type="FunFam" id="3.40.50.620:FF:000192">
    <property type="entry name" value="Valine--tRNA ligase"/>
    <property type="match status" value="1"/>
</dbReference>
<dbReference type="FunFam" id="3.40.50.620:FF:000324">
    <property type="entry name" value="Valine--tRNA ligase"/>
    <property type="match status" value="1"/>
</dbReference>
<dbReference type="Gene3D" id="3.40.50.620">
    <property type="entry name" value="HUPs"/>
    <property type="match status" value="2"/>
</dbReference>
<dbReference type="Gene3D" id="1.10.730.10">
    <property type="entry name" value="Isoleucyl-tRNA Synthetase, Domain 1"/>
    <property type="match status" value="1"/>
</dbReference>
<dbReference type="HAMAP" id="MF_02005">
    <property type="entry name" value="Val_tRNA_synth_type2"/>
    <property type="match status" value="1"/>
</dbReference>
<dbReference type="InterPro" id="IPR001412">
    <property type="entry name" value="aa-tRNA-synth_I_CS"/>
</dbReference>
<dbReference type="InterPro" id="IPR002300">
    <property type="entry name" value="aa-tRNA-synth_Ia"/>
</dbReference>
<dbReference type="InterPro" id="IPR033705">
    <property type="entry name" value="Anticodon_Ia_Val"/>
</dbReference>
<dbReference type="InterPro" id="IPR013155">
    <property type="entry name" value="M/V/L/I-tRNA-synth_anticd-bd"/>
</dbReference>
<dbReference type="InterPro" id="IPR014729">
    <property type="entry name" value="Rossmann-like_a/b/a_fold"/>
</dbReference>
<dbReference type="InterPro" id="IPR009080">
    <property type="entry name" value="tRNAsynth_Ia_anticodon-bd"/>
</dbReference>
<dbReference type="InterPro" id="IPR009008">
    <property type="entry name" value="Val/Leu/Ile-tRNA-synth_edit"/>
</dbReference>
<dbReference type="InterPro" id="IPR022874">
    <property type="entry name" value="Valine-tRNA_ligase_type_2"/>
</dbReference>
<dbReference type="InterPro" id="IPR002303">
    <property type="entry name" value="Valyl-tRNA_ligase"/>
</dbReference>
<dbReference type="NCBIfam" id="NF009687">
    <property type="entry name" value="PRK13208.1"/>
    <property type="match status" value="1"/>
</dbReference>
<dbReference type="NCBIfam" id="TIGR00422">
    <property type="entry name" value="valS"/>
    <property type="match status" value="1"/>
</dbReference>
<dbReference type="PANTHER" id="PTHR11946:SF93">
    <property type="entry name" value="VALINE--TRNA LIGASE, CHLOROPLASTIC_MITOCHONDRIAL 2"/>
    <property type="match status" value="1"/>
</dbReference>
<dbReference type="PANTHER" id="PTHR11946">
    <property type="entry name" value="VALYL-TRNA SYNTHETASES"/>
    <property type="match status" value="1"/>
</dbReference>
<dbReference type="Pfam" id="PF08264">
    <property type="entry name" value="Anticodon_1"/>
    <property type="match status" value="1"/>
</dbReference>
<dbReference type="Pfam" id="PF00133">
    <property type="entry name" value="tRNA-synt_1"/>
    <property type="match status" value="1"/>
</dbReference>
<dbReference type="PRINTS" id="PR00986">
    <property type="entry name" value="TRNASYNTHVAL"/>
</dbReference>
<dbReference type="SUPFAM" id="SSF47323">
    <property type="entry name" value="Anticodon-binding domain of a subclass of class I aminoacyl-tRNA synthetases"/>
    <property type="match status" value="1"/>
</dbReference>
<dbReference type="SUPFAM" id="SSF52374">
    <property type="entry name" value="Nucleotidylyl transferase"/>
    <property type="match status" value="1"/>
</dbReference>
<dbReference type="SUPFAM" id="SSF50677">
    <property type="entry name" value="ValRS/IleRS/LeuRS editing domain"/>
    <property type="match status" value="1"/>
</dbReference>
<dbReference type="PROSITE" id="PS00178">
    <property type="entry name" value="AA_TRNA_LIGASE_I"/>
    <property type="match status" value="1"/>
</dbReference>
<proteinExistence type="inferred from homology"/>
<gene>
    <name evidence="1" type="primary">valS</name>
    <name type="ordered locus">AF_2224</name>
</gene>
<organism>
    <name type="scientific">Archaeoglobus fulgidus (strain ATCC 49558 / DSM 4304 / JCM 9628 / NBRC 100126 / VC-16)</name>
    <dbReference type="NCBI Taxonomy" id="224325"/>
    <lineage>
        <taxon>Archaea</taxon>
        <taxon>Methanobacteriati</taxon>
        <taxon>Methanobacteriota</taxon>
        <taxon>Archaeoglobi</taxon>
        <taxon>Archaeoglobales</taxon>
        <taxon>Archaeoglobaceae</taxon>
        <taxon>Archaeoglobus</taxon>
    </lineage>
</organism>
<keyword id="KW-0030">Aminoacyl-tRNA synthetase</keyword>
<keyword id="KW-0067">ATP-binding</keyword>
<keyword id="KW-0963">Cytoplasm</keyword>
<keyword id="KW-0436">Ligase</keyword>
<keyword id="KW-0547">Nucleotide-binding</keyword>
<keyword id="KW-0648">Protein biosynthesis</keyword>
<keyword id="KW-1185">Reference proteome</keyword>
<protein>
    <recommendedName>
        <fullName evidence="1">Valine--tRNA ligase</fullName>
        <ecNumber evidence="1">6.1.1.9</ecNumber>
    </recommendedName>
    <alternativeName>
        <fullName evidence="1">Valyl-tRNA synthetase</fullName>
        <shortName evidence="1">ValRS</shortName>
    </alternativeName>
</protein>
<reference key="1">
    <citation type="journal article" date="1997" name="Nature">
        <title>The complete genome sequence of the hyperthermophilic, sulphate-reducing archaeon Archaeoglobus fulgidus.</title>
        <authorList>
            <person name="Klenk H.-P."/>
            <person name="Clayton R.A."/>
            <person name="Tomb J.-F."/>
            <person name="White O."/>
            <person name="Nelson K.E."/>
            <person name="Ketchum K.A."/>
            <person name="Dodson R.J."/>
            <person name="Gwinn M.L."/>
            <person name="Hickey E.K."/>
            <person name="Peterson J.D."/>
            <person name="Richardson D.L."/>
            <person name="Kerlavage A.R."/>
            <person name="Graham D.E."/>
            <person name="Kyrpides N.C."/>
            <person name="Fleischmann R.D."/>
            <person name="Quackenbush J."/>
            <person name="Lee N.H."/>
            <person name="Sutton G.G."/>
            <person name="Gill S.R."/>
            <person name="Kirkness E.F."/>
            <person name="Dougherty B.A."/>
            <person name="McKenney K."/>
            <person name="Adams M.D."/>
            <person name="Loftus B.J."/>
            <person name="Peterson S.N."/>
            <person name="Reich C.I."/>
            <person name="McNeil L.K."/>
            <person name="Badger J.H."/>
            <person name="Glodek A."/>
            <person name="Zhou L."/>
            <person name="Overbeek R."/>
            <person name="Gocayne J.D."/>
            <person name="Weidman J.F."/>
            <person name="McDonald L.A."/>
            <person name="Utterback T.R."/>
            <person name="Cotton M.D."/>
            <person name="Spriggs T."/>
            <person name="Artiach P."/>
            <person name="Kaine B.P."/>
            <person name="Sykes S.M."/>
            <person name="Sadow P.W."/>
            <person name="D'Andrea K.P."/>
            <person name="Bowman C."/>
            <person name="Fujii C."/>
            <person name="Garland S.A."/>
            <person name="Mason T.M."/>
            <person name="Olsen G.J."/>
            <person name="Fraser C.M."/>
            <person name="Smith H.O."/>
            <person name="Woese C.R."/>
            <person name="Venter J.C."/>
        </authorList>
    </citation>
    <scope>NUCLEOTIDE SEQUENCE [LARGE SCALE GENOMIC DNA]</scope>
    <source>
        <strain>ATCC 49558 / DSM 4304 / JCM 9628 / NBRC 100126 / VC-16</strain>
    </source>
</reference>